<proteinExistence type="inferred from homology"/>
<protein>
    <recommendedName>
        <fullName evidence="1">Periplasmic trehalase</fullName>
        <ecNumber evidence="1">3.2.1.28</ecNumber>
    </recommendedName>
    <alternativeName>
        <fullName evidence="1">Alpha,alpha-trehalase</fullName>
    </alternativeName>
    <alternativeName>
        <fullName evidence="1">Alpha,alpha-trehalose glucohydrolase</fullName>
    </alternativeName>
</protein>
<name>TREA_SALA4</name>
<comment type="function">
    <text evidence="1">Provides the cells with the ability to utilize trehalose at high osmolarity by splitting it into glucose molecules that can subsequently be taken up by the phosphotransferase-mediated uptake system.</text>
</comment>
<comment type="catalytic activity">
    <reaction evidence="1">
        <text>alpha,alpha-trehalose + H2O = alpha-D-glucose + beta-D-glucose</text>
        <dbReference type="Rhea" id="RHEA:32675"/>
        <dbReference type="ChEBI" id="CHEBI:15377"/>
        <dbReference type="ChEBI" id="CHEBI:15903"/>
        <dbReference type="ChEBI" id="CHEBI:16551"/>
        <dbReference type="ChEBI" id="CHEBI:17925"/>
        <dbReference type="EC" id="3.2.1.28"/>
    </reaction>
</comment>
<comment type="subunit">
    <text evidence="1">Monomer.</text>
</comment>
<comment type="subcellular location">
    <subcellularLocation>
        <location evidence="1">Periplasm</location>
    </subcellularLocation>
</comment>
<comment type="similarity">
    <text evidence="1">Belongs to the glycosyl hydrolase 37 family.</text>
</comment>
<accession>B5F4F0</accession>
<dbReference type="EC" id="3.2.1.28" evidence="1"/>
<dbReference type="EMBL" id="CP001138">
    <property type="protein sequence ID" value="ACH51939.1"/>
    <property type="molecule type" value="Genomic_DNA"/>
</dbReference>
<dbReference type="RefSeq" id="WP_000612835.1">
    <property type="nucleotide sequence ID" value="NC_011149.1"/>
</dbReference>
<dbReference type="SMR" id="B5F4F0"/>
<dbReference type="CAZy" id="GH37">
    <property type="family name" value="Glycoside Hydrolase Family 37"/>
</dbReference>
<dbReference type="KEGG" id="sea:SeAg_B1337"/>
<dbReference type="HOGENOM" id="CLU_006451_3_1_6"/>
<dbReference type="Proteomes" id="UP000008819">
    <property type="component" value="Chromosome"/>
</dbReference>
<dbReference type="GO" id="GO:0042597">
    <property type="term" value="C:periplasmic space"/>
    <property type="evidence" value="ECO:0007669"/>
    <property type="project" value="UniProtKB-SubCell"/>
</dbReference>
<dbReference type="GO" id="GO:0004555">
    <property type="term" value="F:alpha,alpha-trehalase activity"/>
    <property type="evidence" value="ECO:0007669"/>
    <property type="project" value="UniProtKB-UniRule"/>
</dbReference>
<dbReference type="GO" id="GO:0071474">
    <property type="term" value="P:cellular hyperosmotic response"/>
    <property type="evidence" value="ECO:0007669"/>
    <property type="project" value="InterPro"/>
</dbReference>
<dbReference type="GO" id="GO:0005993">
    <property type="term" value="P:trehalose catabolic process"/>
    <property type="evidence" value="ECO:0007669"/>
    <property type="project" value="InterPro"/>
</dbReference>
<dbReference type="FunFam" id="1.50.10.10:FF:000003">
    <property type="entry name" value="Cytoplasmic trehalase"/>
    <property type="match status" value="1"/>
</dbReference>
<dbReference type="Gene3D" id="1.50.10.10">
    <property type="match status" value="1"/>
</dbReference>
<dbReference type="HAMAP" id="MF_01060">
    <property type="entry name" value="Peripl_trehalase"/>
    <property type="match status" value="1"/>
</dbReference>
<dbReference type="InterPro" id="IPR008928">
    <property type="entry name" value="6-hairpin_glycosidase_sf"/>
</dbReference>
<dbReference type="InterPro" id="IPR012341">
    <property type="entry name" value="6hp_glycosidase-like_sf"/>
</dbReference>
<dbReference type="InterPro" id="IPR001661">
    <property type="entry name" value="Glyco_hydro_37"/>
</dbReference>
<dbReference type="InterPro" id="IPR018232">
    <property type="entry name" value="Glyco_hydro_37_CS"/>
</dbReference>
<dbReference type="InterPro" id="IPR023720">
    <property type="entry name" value="Trehalase_periplasmic"/>
</dbReference>
<dbReference type="NCBIfam" id="NF009773">
    <property type="entry name" value="PRK13270.1"/>
    <property type="match status" value="1"/>
</dbReference>
<dbReference type="NCBIfam" id="NF009774">
    <property type="entry name" value="PRK13271.1"/>
    <property type="match status" value="1"/>
</dbReference>
<dbReference type="PANTHER" id="PTHR23403">
    <property type="entry name" value="TREHALASE"/>
    <property type="match status" value="1"/>
</dbReference>
<dbReference type="PANTHER" id="PTHR23403:SF1">
    <property type="entry name" value="TREHALASE"/>
    <property type="match status" value="1"/>
</dbReference>
<dbReference type="Pfam" id="PF01204">
    <property type="entry name" value="Trehalase"/>
    <property type="match status" value="1"/>
</dbReference>
<dbReference type="PRINTS" id="PR00744">
    <property type="entry name" value="GLHYDRLASE37"/>
</dbReference>
<dbReference type="SUPFAM" id="SSF48208">
    <property type="entry name" value="Six-hairpin glycosidases"/>
    <property type="match status" value="1"/>
</dbReference>
<dbReference type="PROSITE" id="PS00927">
    <property type="entry name" value="TREHALASE_1"/>
    <property type="match status" value="1"/>
</dbReference>
<dbReference type="PROSITE" id="PS00928">
    <property type="entry name" value="TREHALASE_2"/>
    <property type="match status" value="1"/>
</dbReference>
<gene>
    <name evidence="1" type="primary">treA</name>
    <name type="ordered locus">SeAg_B1337</name>
</gene>
<organism>
    <name type="scientific">Salmonella agona (strain SL483)</name>
    <dbReference type="NCBI Taxonomy" id="454166"/>
    <lineage>
        <taxon>Bacteria</taxon>
        <taxon>Pseudomonadati</taxon>
        <taxon>Pseudomonadota</taxon>
        <taxon>Gammaproteobacteria</taxon>
        <taxon>Enterobacterales</taxon>
        <taxon>Enterobacteriaceae</taxon>
        <taxon>Salmonella</taxon>
    </lineage>
</organism>
<evidence type="ECO:0000255" key="1">
    <source>
        <dbReference type="HAMAP-Rule" id="MF_01060"/>
    </source>
</evidence>
<evidence type="ECO:0000256" key="2">
    <source>
        <dbReference type="SAM" id="MobiDB-lite"/>
    </source>
</evidence>
<keyword id="KW-0326">Glycosidase</keyword>
<keyword id="KW-0378">Hydrolase</keyword>
<keyword id="KW-0574">Periplasm</keyword>
<keyword id="KW-0732">Signal</keyword>
<feature type="signal peptide" evidence="1">
    <location>
        <begin position="1"/>
        <end position="34"/>
    </location>
</feature>
<feature type="chain" id="PRO_1000136423" description="Periplasmic trehalase">
    <location>
        <begin position="35"/>
        <end position="570"/>
    </location>
</feature>
<feature type="region of interest" description="Disordered" evidence="2">
    <location>
        <begin position="545"/>
        <end position="570"/>
    </location>
</feature>
<feature type="compositionally biased region" description="Low complexity" evidence="2">
    <location>
        <begin position="554"/>
        <end position="570"/>
    </location>
</feature>
<feature type="active site" description="Proton donor/acceptor" evidence="1">
    <location>
        <position position="319"/>
    </location>
</feature>
<feature type="active site" description="Proton donor/acceptor" evidence="1">
    <location>
        <position position="503"/>
    </location>
</feature>
<feature type="binding site" evidence="1">
    <location>
        <position position="159"/>
    </location>
    <ligand>
        <name>substrate</name>
    </ligand>
</feature>
<feature type="binding site" evidence="1">
    <location>
        <begin position="166"/>
        <end position="167"/>
    </location>
    <ligand>
        <name>substrate</name>
    </ligand>
</feature>
<feature type="binding site" evidence="1">
    <location>
        <position position="203"/>
    </location>
    <ligand>
        <name>substrate</name>
    </ligand>
</feature>
<feature type="binding site" evidence="1">
    <location>
        <begin position="212"/>
        <end position="214"/>
    </location>
    <ligand>
        <name>substrate</name>
    </ligand>
</feature>
<feature type="binding site" evidence="1">
    <location>
        <begin position="284"/>
        <end position="286"/>
    </location>
    <ligand>
        <name>substrate</name>
    </ligand>
</feature>
<feature type="binding site" evidence="1">
    <location>
        <position position="317"/>
    </location>
    <ligand>
        <name>substrate</name>
    </ligand>
</feature>
<feature type="binding site" evidence="1">
    <location>
        <position position="518"/>
    </location>
    <ligand>
        <name>substrate</name>
    </ligand>
</feature>
<sequence>MIPPEIRRSVLLQKAIKLALAGTLLTFASFSATAADPSSDTETPQPPDILLGPLFNDVQNAKLFPDQKTFADAIPNSDPLMILADYRMQRNQSGFDLRHFVDVNFTLPKAGEKYVPPAGQSLREHIDGLWPVLTRSTKNVEKWDSLLPLPESYVVPGGRFREIYYWDSYFTMLGLAESGHWDKVADMVANFGYEIDAWGHIPNGNRTYYLSRSQPPFFAFMVELLAQHEGDDALKEYLPQLQKEYAYWMEGVETLQPGQQNQRVVKLEDGSVLNRYWDDRDTPRPESWVEDIATAKSNPNRPATEIYRDLRSAAASGWDFSSRWMDNPQQLSTIRTTTIVPVDLNALLYQLEKTLARASAAAGDRAKASQYDALANARQKAIEMHLWNNKEGWYADYDLQNNKIRNQLTAAALFPLYVNAAAKDRAAKVAAAAQAHLLQPGGLATTSVKSGQQWDAPNGWAPLQWVAAEGLQNYGQDDVAMEVTWRFLTNVQHTYDREKKLVEKYDVSSTGTGGGGGEYPLQDGFGWTNGVTLKMLDLICPQEKPCDSVPSTRPASLSATPTKTPSAATQ</sequence>
<reference key="1">
    <citation type="journal article" date="2011" name="J. Bacteriol.">
        <title>Comparative genomics of 28 Salmonella enterica isolates: evidence for CRISPR-mediated adaptive sublineage evolution.</title>
        <authorList>
            <person name="Fricke W.F."/>
            <person name="Mammel M.K."/>
            <person name="McDermott P.F."/>
            <person name="Tartera C."/>
            <person name="White D.G."/>
            <person name="Leclerc J.E."/>
            <person name="Ravel J."/>
            <person name="Cebula T.A."/>
        </authorList>
    </citation>
    <scope>NUCLEOTIDE SEQUENCE [LARGE SCALE GENOMIC DNA]</scope>
    <source>
        <strain>SL483</strain>
    </source>
</reference>